<organism>
    <name type="scientific">Azospirillum brasilense</name>
    <dbReference type="NCBI Taxonomy" id="192"/>
    <lineage>
        <taxon>Bacteria</taxon>
        <taxon>Pseudomonadati</taxon>
        <taxon>Pseudomonadota</taxon>
        <taxon>Alphaproteobacteria</taxon>
        <taxon>Rhodospirillales</taxon>
        <taxon>Azospirillaceae</taxon>
        <taxon>Azospirillum</taxon>
    </lineage>
</organism>
<keyword id="KW-0574">Periplasm</keyword>
<keyword id="KW-0732">Signal</keyword>
<keyword id="KW-0762">Sugar transport</keyword>
<keyword id="KW-0813">Transport</keyword>
<proteinExistence type="inferred from homology"/>
<sequence length="334" mass="35846">MNRTIRRHTLRALLAALCIAPLGMQGAARADAPLKIGFLVKMPEQAWFINEQNAASALGQKENFSVVKIGTPDGEKVLAAIDNLGSQGAQGFVICAPDVRLGPAIAARAKRYNMKFVTVDDQLVDSTGKPLPNVPHLGMSATKIGNQVGQAISDEMKRRGWKPEEVGALRITNYELPTAKLRTDGATQALLANGFRKENIFDAPQKTTDDEGGFSAAAPVLARHPNVKKWVVYALNEETVLGAVRATEQLHIPAADVIGVGINGAGEAFAEFQKKEPTGFYGTIAVSSTNHGKDSTQNLVEWIRDGKTPPADTQTSGKLMTRANWQAVRAELGI</sequence>
<dbReference type="EMBL" id="AB241136">
    <property type="protein sequence ID" value="BAE94272.1"/>
    <property type="molecule type" value="Genomic_DNA"/>
</dbReference>
<dbReference type="SMR" id="Q1JUP8"/>
<dbReference type="GO" id="GO:0030288">
    <property type="term" value="C:outer membrane-bounded periplasmic space"/>
    <property type="evidence" value="ECO:0007669"/>
    <property type="project" value="TreeGrafter"/>
</dbReference>
<dbReference type="GO" id="GO:0030246">
    <property type="term" value="F:carbohydrate binding"/>
    <property type="evidence" value="ECO:0007669"/>
    <property type="project" value="TreeGrafter"/>
</dbReference>
<dbReference type="GO" id="GO:0042882">
    <property type="term" value="P:L-arabinose transmembrane transport"/>
    <property type="evidence" value="ECO:0000317"/>
    <property type="project" value="UniProtKB"/>
</dbReference>
<dbReference type="CDD" id="cd01540">
    <property type="entry name" value="PBP1_arabinose_binding"/>
    <property type="match status" value="1"/>
</dbReference>
<dbReference type="Gene3D" id="3.40.50.2300">
    <property type="match status" value="2"/>
</dbReference>
<dbReference type="InterPro" id="IPR026266">
    <property type="entry name" value="AraF"/>
</dbReference>
<dbReference type="InterPro" id="IPR050555">
    <property type="entry name" value="Bact_Solute-Bind_Prot2"/>
</dbReference>
<dbReference type="InterPro" id="IPR001761">
    <property type="entry name" value="Peripla_BP/Lac1_sug-bd_dom"/>
</dbReference>
<dbReference type="InterPro" id="IPR028082">
    <property type="entry name" value="Peripla_BP_I"/>
</dbReference>
<dbReference type="PANTHER" id="PTHR30036">
    <property type="entry name" value="D-XYLOSE-BINDING PERIPLASMIC PROTEIN"/>
    <property type="match status" value="1"/>
</dbReference>
<dbReference type="PANTHER" id="PTHR30036:SF6">
    <property type="entry name" value="L-ARABINOSE-BINDING PERIPLASMIC PROTEIN"/>
    <property type="match status" value="1"/>
</dbReference>
<dbReference type="Pfam" id="PF00532">
    <property type="entry name" value="Peripla_BP_1"/>
    <property type="match status" value="1"/>
</dbReference>
<dbReference type="PIRSF" id="PIRSF002816">
    <property type="entry name" value="AraF"/>
    <property type="match status" value="1"/>
</dbReference>
<dbReference type="SUPFAM" id="SSF53822">
    <property type="entry name" value="Periplasmic binding protein-like I"/>
    <property type="match status" value="1"/>
</dbReference>
<feature type="signal peptide" evidence="2">
    <location>
        <begin position="1"/>
        <end position="30"/>
    </location>
</feature>
<feature type="chain" id="PRO_0000418502" description="ABC transporter L-arabinose-binding periplasmic protein">
    <location>
        <begin position="31"/>
        <end position="334"/>
    </location>
</feature>
<reference key="1">
    <citation type="journal article" date="2006" name="J. Biol. Chem.">
        <title>Identification and characterization of L-arabonate dehydratase, L-2-keto-3-deoxyarabonate dehydratase and L-arabinolactonase involved in an alternative pathway of L-arabinose metabolism: novel evolutionary insight into sugar metabolism.</title>
        <authorList>
            <person name="Watanabe S."/>
            <person name="Shimada N."/>
            <person name="Tajima K."/>
            <person name="Kodaki T."/>
            <person name="Makino K."/>
        </authorList>
    </citation>
    <scope>NUCLEOTIDE SEQUENCE [GENOMIC DNA]</scope>
    <scope>PROBABLE FUNCTION</scope>
    <source>
        <strain>ATCC 29145 / DSM 1690 / IMET 11303 / Sp7</strain>
    </source>
</reference>
<gene>
    <name type="primary">araF</name>
    <name type="synonym">araX</name>
</gene>
<name>ARAF_AZOBR</name>
<evidence type="ECO:0000250" key="1"/>
<evidence type="ECO:0000255" key="2"/>
<evidence type="ECO:0000305" key="3"/>
<protein>
    <recommendedName>
        <fullName>ABC transporter L-arabinose-binding periplasmic protein</fullName>
        <shortName>ABP</shortName>
    </recommendedName>
</protein>
<accession>Q1JUP8</accession>
<comment type="function">
    <text evidence="3">Part of the ABC transporter complex AraFGH involved in L-arabinose import. Binds with high affinity to L-arabinose (Probable).</text>
</comment>
<comment type="subunit">
    <text evidence="3">The complex is composed of two ATP-binding proteins (AraG), two transmembrane proteins (AraH) and a solute-binding protein (AraF).</text>
</comment>
<comment type="subcellular location">
    <subcellularLocation>
        <location evidence="1">Periplasm</location>
    </subcellularLocation>
</comment>
<comment type="similarity">
    <text evidence="3">Belongs to the bacterial solute-binding protein 2 family.</text>
</comment>